<gene>
    <name type="primary">CAB39</name>
</gene>
<organism>
    <name type="scientific">Bos taurus</name>
    <name type="common">Bovine</name>
    <dbReference type="NCBI Taxonomy" id="9913"/>
    <lineage>
        <taxon>Eukaryota</taxon>
        <taxon>Metazoa</taxon>
        <taxon>Chordata</taxon>
        <taxon>Craniata</taxon>
        <taxon>Vertebrata</taxon>
        <taxon>Euteleostomi</taxon>
        <taxon>Mammalia</taxon>
        <taxon>Eutheria</taxon>
        <taxon>Laurasiatheria</taxon>
        <taxon>Artiodactyla</taxon>
        <taxon>Ruminantia</taxon>
        <taxon>Pecora</taxon>
        <taxon>Bovidae</taxon>
        <taxon>Bovinae</taxon>
        <taxon>Bos</taxon>
    </lineage>
</organism>
<keyword id="KW-0963">Cytoplasm</keyword>
<keyword id="KW-1185">Reference proteome</keyword>
<feature type="chain" id="PRO_0000244879" description="Calcium-binding protein 39">
    <location>
        <begin position="1"/>
        <end position="341"/>
    </location>
</feature>
<proteinExistence type="evidence at transcript level"/>
<dbReference type="EMBL" id="BC114154">
    <property type="protein sequence ID" value="AAI14155.1"/>
    <property type="molecule type" value="mRNA"/>
</dbReference>
<dbReference type="RefSeq" id="NP_001039552.1">
    <property type="nucleotide sequence ID" value="NM_001046087.2"/>
</dbReference>
<dbReference type="SMR" id="Q29RI6"/>
<dbReference type="FunCoup" id="Q29RI6">
    <property type="interactions" value="4292"/>
</dbReference>
<dbReference type="STRING" id="9913.ENSBTAP00000063808"/>
<dbReference type="PaxDb" id="9913-ENSBTAP00000052156"/>
<dbReference type="Ensembl" id="ENSBTAT00000053463.3">
    <property type="protein sequence ID" value="ENSBTAP00000052156.2"/>
    <property type="gene ID" value="ENSBTAG00000040055.4"/>
</dbReference>
<dbReference type="GeneID" id="511451"/>
<dbReference type="KEGG" id="bta:511451"/>
<dbReference type="CTD" id="51719"/>
<dbReference type="VEuPathDB" id="HostDB:ENSBTAG00000040055"/>
<dbReference type="VGNC" id="VGNC:26661">
    <property type="gene designation" value="CAB39"/>
</dbReference>
<dbReference type="eggNOG" id="KOG1566">
    <property type="taxonomic scope" value="Eukaryota"/>
</dbReference>
<dbReference type="GeneTree" id="ENSGT00390000004360"/>
<dbReference type="HOGENOM" id="CLU_035755_0_0_1"/>
<dbReference type="InParanoid" id="Q29RI6"/>
<dbReference type="OMA" id="AYDHKES"/>
<dbReference type="OrthoDB" id="609103at2759"/>
<dbReference type="TreeFam" id="TF314910"/>
<dbReference type="Reactome" id="R-BTA-380972">
    <property type="pathway name" value="Energy dependent regulation of mTOR by LKB1-AMPK"/>
</dbReference>
<dbReference type="Reactome" id="R-BTA-6798695">
    <property type="pathway name" value="Neutrophil degranulation"/>
</dbReference>
<dbReference type="Proteomes" id="UP000009136">
    <property type="component" value="Chromosome 2"/>
</dbReference>
<dbReference type="Bgee" id="ENSBTAG00000040055">
    <property type="expression patterns" value="Expressed in gluteal muscle and 104 other cell types or tissues"/>
</dbReference>
<dbReference type="GO" id="GO:0005737">
    <property type="term" value="C:cytoplasm"/>
    <property type="evidence" value="ECO:0007669"/>
    <property type="project" value="UniProtKB-SubCell"/>
</dbReference>
<dbReference type="GO" id="GO:0030295">
    <property type="term" value="F:protein kinase activator activity"/>
    <property type="evidence" value="ECO:0000250"/>
    <property type="project" value="UniProtKB"/>
</dbReference>
<dbReference type="GO" id="GO:0043539">
    <property type="term" value="F:protein serine/threonine kinase activator activity"/>
    <property type="evidence" value="ECO:0000318"/>
    <property type="project" value="GO_Central"/>
</dbReference>
<dbReference type="GO" id="GO:0035556">
    <property type="term" value="P:intracellular signal transduction"/>
    <property type="evidence" value="ECO:0000318"/>
    <property type="project" value="GO_Central"/>
</dbReference>
<dbReference type="FunFam" id="1.25.10.10:FF:000025">
    <property type="entry name" value="Calcium-binding protein 39"/>
    <property type="match status" value="1"/>
</dbReference>
<dbReference type="Gene3D" id="1.25.10.10">
    <property type="entry name" value="Leucine-rich Repeat Variant"/>
    <property type="match status" value="1"/>
</dbReference>
<dbReference type="InterPro" id="IPR011989">
    <property type="entry name" value="ARM-like"/>
</dbReference>
<dbReference type="InterPro" id="IPR016024">
    <property type="entry name" value="ARM-type_fold"/>
</dbReference>
<dbReference type="InterPro" id="IPR013878">
    <property type="entry name" value="Mo25"/>
</dbReference>
<dbReference type="PANTHER" id="PTHR10182:SF11">
    <property type="entry name" value="CALCIUM-BINDING PROTEIN 39"/>
    <property type="match status" value="1"/>
</dbReference>
<dbReference type="PANTHER" id="PTHR10182">
    <property type="entry name" value="CALCIUM-BINDING PROTEIN 39-RELATED"/>
    <property type="match status" value="1"/>
</dbReference>
<dbReference type="Pfam" id="PF08569">
    <property type="entry name" value="Mo25"/>
    <property type="match status" value="1"/>
</dbReference>
<dbReference type="SUPFAM" id="SSF48371">
    <property type="entry name" value="ARM repeat"/>
    <property type="match status" value="1"/>
</dbReference>
<evidence type="ECO:0000250" key="1"/>
<evidence type="ECO:0000305" key="2"/>
<accession>Q29RI6</accession>
<reference key="1">
    <citation type="submission" date="2006-02" db="EMBL/GenBank/DDBJ databases">
        <authorList>
            <consortium name="NIH - Mammalian Gene Collection (MGC) project"/>
        </authorList>
    </citation>
    <scope>NUCLEOTIDE SEQUENCE [LARGE SCALE MRNA]</scope>
    <source>
        <strain>Hereford</strain>
        <tissue>Hypothalamus</tissue>
    </source>
</reference>
<sequence length="341" mass="39869">MPFPFGKSHKSPADIVKNLKESMAVLEKQDISDKKAEKATEEVSKNLVAMKEILYGTNEKEPQTEAVAQLAQELYNSGLLSTLVADLQLIDFEGKKDVAQIFNNILRRQIGTRTPTVEYICTQQNILFMLLKGYESPEIALNCGIMLRECIRHEPLAKIILWSEQFYDFFRYVEMSTFDIASDAFATFKDLLTRHKLLSAEFLEQHYDRFFSEYEKLLHSENYVTKRQSLKLLGELLLDRHNFTIMTKYISKPENLKLMMNLLRDKSRNIQFEAFHVFKVFVANPNKTQPILDILLKNQAKLIEFLSKFQNDRTEDEQFNDEKTYLVKQIRDLKRPAQQEA</sequence>
<protein>
    <recommendedName>
        <fullName>Calcium-binding protein 39</fullName>
    </recommendedName>
    <alternativeName>
        <fullName>MO25alpha</fullName>
    </alternativeName>
    <alternativeName>
        <fullName>Protein Mo25</fullName>
    </alternativeName>
</protein>
<name>CAB39_BOVIN</name>
<comment type="function">
    <text evidence="1">Component of a complex that binds and activates STK11/LKB1. In the complex, required to stabilize the interaction between CAB39/MO25 (CAB39/MO25alpha or CAB39L/MO25beta) and STK11/LKB1 (By similarity).</text>
</comment>
<comment type="subunit">
    <text evidence="1">Component of a trimeric complex composed of STK11/LKB1, STRAD (STRADA or STRADB) and CAB39/MO25 (CAB39/MO25alpha or CAB39L/MO25beta): the complex tethers STK11/LKB1 in the cytoplasm and stimulates its catalytic activity.</text>
</comment>
<comment type="subcellular location">
    <subcellularLocation>
        <location evidence="2">Cytoplasm</location>
    </subcellularLocation>
</comment>
<comment type="similarity">
    <text evidence="2">Belongs to the Mo25 family.</text>
</comment>